<sequence length="420" mass="44826">MRKIIINGGKKLQGEVTVSGAKNSVVALIPAIILSDGVVTLDGVPAISDVDNLIEIIEVMGGSVKRDGETLEIDPRGVKDMPMPFGKINSLRASYYFYGSLLGRYGQAIVGLPGGCDLGPRPIDLHLKAFEAMGASIFYEGEAMRIATDAGQRIKGAHIYMDTVSVGATINTMLAAAKADGRTVIENAAREPEIIDVATLLNNMGARVRGAGTEVITIEGVESLHGTRHQVIPDRIEAGSYIAMAAAIGKGIKIKNVLYEHLESFICKLEAMGVRMTVEEDAIFVEEQGDLKPVDIKTSPYPGFATDLQQPMTPLLLKASGRGKIIDTIYEKRVNHVPELARMGADIQVLGGQIVYNGPTQLSGAPVKASDLRAGAALVTAGLMADGQTEITNIEFILRGYSNIIEKLSDLGADIRLIED</sequence>
<keyword id="KW-0131">Cell cycle</keyword>
<keyword id="KW-0132">Cell division</keyword>
<keyword id="KW-0133">Cell shape</keyword>
<keyword id="KW-0961">Cell wall biogenesis/degradation</keyword>
<keyword id="KW-0963">Cytoplasm</keyword>
<keyword id="KW-0573">Peptidoglycan synthesis</keyword>
<keyword id="KW-0670">Pyruvate</keyword>
<keyword id="KW-1185">Reference proteome</keyword>
<keyword id="KW-0808">Transferase</keyword>
<evidence type="ECO:0000255" key="1">
    <source>
        <dbReference type="HAMAP-Rule" id="MF_00111"/>
    </source>
</evidence>
<evidence type="ECO:0000305" key="2"/>
<gene>
    <name evidence="1" type="primary">murA2</name>
    <name type="synonym">murZ</name>
    <name type="ordered locus">stu1560</name>
</gene>
<name>MURA2_STRT2</name>
<proteinExistence type="inferred from homology"/>
<protein>
    <recommendedName>
        <fullName evidence="1">UDP-N-acetylglucosamine 1-carboxyvinyltransferase 2</fullName>
        <ecNumber evidence="1">2.5.1.7</ecNumber>
    </recommendedName>
    <alternativeName>
        <fullName evidence="1">Enoylpyruvate transferase 2</fullName>
    </alternativeName>
    <alternativeName>
        <fullName evidence="1">UDP-N-acetylglucosamine enolpyruvyl transferase 2</fullName>
        <shortName evidence="1">EPT 2</shortName>
    </alternativeName>
</protein>
<feature type="chain" id="PRO_0000231281" description="UDP-N-acetylglucosamine 1-carboxyvinyltransferase 2">
    <location>
        <begin position="1"/>
        <end position="420"/>
    </location>
</feature>
<feature type="active site" description="Proton donor" evidence="1">
    <location>
        <position position="116"/>
    </location>
</feature>
<feature type="binding site" evidence="1">
    <location>
        <begin position="22"/>
        <end position="23"/>
    </location>
    <ligand>
        <name>phosphoenolpyruvate</name>
        <dbReference type="ChEBI" id="CHEBI:58702"/>
    </ligand>
</feature>
<feature type="binding site" evidence="1">
    <location>
        <position position="92"/>
    </location>
    <ligand>
        <name>UDP-N-acetyl-alpha-D-glucosamine</name>
        <dbReference type="ChEBI" id="CHEBI:57705"/>
    </ligand>
</feature>
<feature type="binding site" evidence="1">
    <location>
        <begin position="121"/>
        <end position="125"/>
    </location>
    <ligand>
        <name>UDP-N-acetyl-alpha-D-glucosamine</name>
        <dbReference type="ChEBI" id="CHEBI:57705"/>
    </ligand>
</feature>
<feature type="binding site" evidence="1">
    <location>
        <position position="307"/>
    </location>
    <ligand>
        <name>UDP-N-acetyl-alpha-D-glucosamine</name>
        <dbReference type="ChEBI" id="CHEBI:57705"/>
    </ligand>
</feature>
<feature type="binding site" evidence="1">
    <location>
        <position position="329"/>
    </location>
    <ligand>
        <name>UDP-N-acetyl-alpha-D-glucosamine</name>
        <dbReference type="ChEBI" id="CHEBI:57705"/>
    </ligand>
</feature>
<feature type="modified residue" description="2-(S-cysteinyl)pyruvic acid O-phosphothioketal" evidence="1">
    <location>
        <position position="116"/>
    </location>
</feature>
<dbReference type="EC" id="2.5.1.7" evidence="1"/>
<dbReference type="EMBL" id="CP000023">
    <property type="protein sequence ID" value="AAV61163.1"/>
    <property type="status" value="ALT_INIT"/>
    <property type="molecule type" value="Genomic_DNA"/>
</dbReference>
<dbReference type="RefSeq" id="WP_022096991.1">
    <property type="nucleotide sequence ID" value="NC_006448.1"/>
</dbReference>
<dbReference type="SMR" id="Q5M376"/>
<dbReference type="STRING" id="264199.stu1560"/>
<dbReference type="GeneID" id="66899307"/>
<dbReference type="KEGG" id="stl:stu1560"/>
<dbReference type="eggNOG" id="COG0766">
    <property type="taxonomic scope" value="Bacteria"/>
</dbReference>
<dbReference type="HOGENOM" id="CLU_027387_0_0_9"/>
<dbReference type="UniPathway" id="UPA00219"/>
<dbReference type="Proteomes" id="UP000001170">
    <property type="component" value="Chromosome"/>
</dbReference>
<dbReference type="GO" id="GO:0005737">
    <property type="term" value="C:cytoplasm"/>
    <property type="evidence" value="ECO:0007669"/>
    <property type="project" value="UniProtKB-SubCell"/>
</dbReference>
<dbReference type="GO" id="GO:0008760">
    <property type="term" value="F:UDP-N-acetylglucosamine 1-carboxyvinyltransferase activity"/>
    <property type="evidence" value="ECO:0007669"/>
    <property type="project" value="UniProtKB-UniRule"/>
</dbReference>
<dbReference type="GO" id="GO:0051301">
    <property type="term" value="P:cell division"/>
    <property type="evidence" value="ECO:0007669"/>
    <property type="project" value="UniProtKB-KW"/>
</dbReference>
<dbReference type="GO" id="GO:0071555">
    <property type="term" value="P:cell wall organization"/>
    <property type="evidence" value="ECO:0007669"/>
    <property type="project" value="UniProtKB-KW"/>
</dbReference>
<dbReference type="GO" id="GO:0009252">
    <property type="term" value="P:peptidoglycan biosynthetic process"/>
    <property type="evidence" value="ECO:0007669"/>
    <property type="project" value="UniProtKB-UniRule"/>
</dbReference>
<dbReference type="GO" id="GO:0008360">
    <property type="term" value="P:regulation of cell shape"/>
    <property type="evidence" value="ECO:0007669"/>
    <property type="project" value="UniProtKB-KW"/>
</dbReference>
<dbReference type="GO" id="GO:0019277">
    <property type="term" value="P:UDP-N-acetylgalactosamine biosynthetic process"/>
    <property type="evidence" value="ECO:0007669"/>
    <property type="project" value="InterPro"/>
</dbReference>
<dbReference type="CDD" id="cd01555">
    <property type="entry name" value="UdpNAET"/>
    <property type="match status" value="1"/>
</dbReference>
<dbReference type="FunFam" id="3.65.10.10:FF:000001">
    <property type="entry name" value="UDP-N-acetylglucosamine 1-carboxyvinyltransferase"/>
    <property type="match status" value="1"/>
</dbReference>
<dbReference type="Gene3D" id="3.65.10.10">
    <property type="entry name" value="Enolpyruvate transferase domain"/>
    <property type="match status" value="2"/>
</dbReference>
<dbReference type="HAMAP" id="MF_00111">
    <property type="entry name" value="MurA"/>
    <property type="match status" value="1"/>
</dbReference>
<dbReference type="InterPro" id="IPR001986">
    <property type="entry name" value="Enolpyruvate_Tfrase_dom"/>
</dbReference>
<dbReference type="InterPro" id="IPR036968">
    <property type="entry name" value="Enolpyruvate_Tfrase_sf"/>
</dbReference>
<dbReference type="InterPro" id="IPR050068">
    <property type="entry name" value="MurA_subfamily"/>
</dbReference>
<dbReference type="InterPro" id="IPR013792">
    <property type="entry name" value="RNA3'P_cycl/enolpyr_Trfase_a/b"/>
</dbReference>
<dbReference type="InterPro" id="IPR005750">
    <property type="entry name" value="UDP_GlcNAc_COvinyl_MurA"/>
</dbReference>
<dbReference type="NCBIfam" id="TIGR01072">
    <property type="entry name" value="murA"/>
    <property type="match status" value="1"/>
</dbReference>
<dbReference type="NCBIfam" id="NF006873">
    <property type="entry name" value="PRK09369.1"/>
    <property type="match status" value="1"/>
</dbReference>
<dbReference type="NCBIfam" id="NF009470">
    <property type="entry name" value="PRK12830.1"/>
    <property type="match status" value="1"/>
</dbReference>
<dbReference type="PANTHER" id="PTHR43783">
    <property type="entry name" value="UDP-N-ACETYLGLUCOSAMINE 1-CARBOXYVINYLTRANSFERASE"/>
    <property type="match status" value="1"/>
</dbReference>
<dbReference type="PANTHER" id="PTHR43783:SF2">
    <property type="entry name" value="UDP-N-ACETYLGLUCOSAMINE 1-CARBOXYVINYLTRANSFERASE 2"/>
    <property type="match status" value="1"/>
</dbReference>
<dbReference type="Pfam" id="PF00275">
    <property type="entry name" value="EPSP_synthase"/>
    <property type="match status" value="1"/>
</dbReference>
<dbReference type="SUPFAM" id="SSF55205">
    <property type="entry name" value="EPT/RTPC-like"/>
    <property type="match status" value="1"/>
</dbReference>
<reference key="1">
    <citation type="journal article" date="2004" name="Nat. Biotechnol.">
        <title>Complete sequence and comparative genome analysis of the dairy bacterium Streptococcus thermophilus.</title>
        <authorList>
            <person name="Bolotin A."/>
            <person name="Quinquis B."/>
            <person name="Renault P."/>
            <person name="Sorokin A."/>
            <person name="Ehrlich S.D."/>
            <person name="Kulakauskas S."/>
            <person name="Lapidus A."/>
            <person name="Goltsman E."/>
            <person name="Mazur M."/>
            <person name="Pusch G.D."/>
            <person name="Fonstein M."/>
            <person name="Overbeek R."/>
            <person name="Kyprides N."/>
            <person name="Purnelle B."/>
            <person name="Prozzi D."/>
            <person name="Ngui K."/>
            <person name="Masuy D."/>
            <person name="Hancy F."/>
            <person name="Burteau S."/>
            <person name="Boutry M."/>
            <person name="Delcour J."/>
            <person name="Goffeau A."/>
            <person name="Hols P."/>
        </authorList>
    </citation>
    <scope>NUCLEOTIDE SEQUENCE [LARGE SCALE GENOMIC DNA]</scope>
    <source>
        <strain>ATCC BAA-250 / LMG 18311</strain>
    </source>
</reference>
<accession>Q5M376</accession>
<organism>
    <name type="scientific">Streptococcus thermophilus (strain ATCC BAA-250 / LMG 18311)</name>
    <dbReference type="NCBI Taxonomy" id="264199"/>
    <lineage>
        <taxon>Bacteria</taxon>
        <taxon>Bacillati</taxon>
        <taxon>Bacillota</taxon>
        <taxon>Bacilli</taxon>
        <taxon>Lactobacillales</taxon>
        <taxon>Streptococcaceae</taxon>
        <taxon>Streptococcus</taxon>
    </lineage>
</organism>
<comment type="function">
    <text evidence="1">Cell wall formation. Adds enolpyruvyl to UDP-N-acetylglucosamine.</text>
</comment>
<comment type="catalytic activity">
    <reaction evidence="1">
        <text>phosphoenolpyruvate + UDP-N-acetyl-alpha-D-glucosamine = UDP-N-acetyl-3-O-(1-carboxyvinyl)-alpha-D-glucosamine + phosphate</text>
        <dbReference type="Rhea" id="RHEA:18681"/>
        <dbReference type="ChEBI" id="CHEBI:43474"/>
        <dbReference type="ChEBI" id="CHEBI:57705"/>
        <dbReference type="ChEBI" id="CHEBI:58702"/>
        <dbReference type="ChEBI" id="CHEBI:68483"/>
        <dbReference type="EC" id="2.5.1.7"/>
    </reaction>
</comment>
<comment type="pathway">
    <text evidence="1">Cell wall biogenesis; peptidoglycan biosynthesis.</text>
</comment>
<comment type="subcellular location">
    <subcellularLocation>
        <location evidence="1">Cytoplasm</location>
    </subcellularLocation>
</comment>
<comment type="similarity">
    <text evidence="1">Belongs to the EPSP synthase family. MurA subfamily.</text>
</comment>
<comment type="sequence caution" evidence="2">
    <conflict type="erroneous initiation">
        <sequence resource="EMBL-CDS" id="AAV61163"/>
    </conflict>
</comment>